<protein>
    <recommendedName>
        <fullName>Putative F-box protein At3g13830</fullName>
    </recommendedName>
</protein>
<organism>
    <name type="scientific">Arabidopsis thaliana</name>
    <name type="common">Mouse-ear cress</name>
    <dbReference type="NCBI Taxonomy" id="3702"/>
    <lineage>
        <taxon>Eukaryota</taxon>
        <taxon>Viridiplantae</taxon>
        <taxon>Streptophyta</taxon>
        <taxon>Embryophyta</taxon>
        <taxon>Tracheophyta</taxon>
        <taxon>Spermatophyta</taxon>
        <taxon>Magnoliopsida</taxon>
        <taxon>eudicotyledons</taxon>
        <taxon>Gunneridae</taxon>
        <taxon>Pentapetalae</taxon>
        <taxon>rosids</taxon>
        <taxon>malvids</taxon>
        <taxon>Brassicales</taxon>
        <taxon>Brassicaceae</taxon>
        <taxon>Camelineae</taxon>
        <taxon>Arabidopsis</taxon>
    </lineage>
</organism>
<name>FB144_ARATH</name>
<feature type="chain" id="PRO_0000283414" description="Putative F-box protein At3g13830">
    <location>
        <begin position="1"/>
        <end position="377"/>
    </location>
</feature>
<feature type="domain" description="F-box" evidence="1">
    <location>
        <begin position="6"/>
        <end position="52"/>
    </location>
</feature>
<reference key="1">
    <citation type="journal article" date="2000" name="DNA Res.">
        <title>Structural analysis of Arabidopsis thaliana chromosome 3. I. Sequence features of the regions of 4,504,864 bp covered by sixty P1 and TAC clones.</title>
        <authorList>
            <person name="Sato S."/>
            <person name="Nakamura Y."/>
            <person name="Kaneko T."/>
            <person name="Katoh T."/>
            <person name="Asamizu E."/>
            <person name="Tabata S."/>
        </authorList>
    </citation>
    <scope>NUCLEOTIDE SEQUENCE [LARGE SCALE GENOMIC DNA]</scope>
    <source>
        <strain>cv. Columbia</strain>
    </source>
</reference>
<reference key="2">
    <citation type="journal article" date="2017" name="Plant J.">
        <title>Araport11: a complete reannotation of the Arabidopsis thaliana reference genome.</title>
        <authorList>
            <person name="Cheng C.Y."/>
            <person name="Krishnakumar V."/>
            <person name="Chan A.P."/>
            <person name="Thibaud-Nissen F."/>
            <person name="Schobel S."/>
            <person name="Town C.D."/>
        </authorList>
    </citation>
    <scope>GENOME REANNOTATION</scope>
    <source>
        <strain>cv. Columbia</strain>
    </source>
</reference>
<keyword id="KW-1185">Reference proteome</keyword>
<sequence>MTTTTTTTMSTLPMVLVDEILSRVPITSLRSLRSTCKRWEAQSKTNLVGGKATARKSSYLGFILIGNKICSMKLDLNGGDDFVDTSVNQISAFDDFEISQLFHCDGLLLCVSNKHYYSNTVMVCNMYLGETRLIEHCCLLEGFDNFGSYAFGYDSSKNRNHKIFRKKLVSGGYEIYSFKSDSWKDLNVDLGESTELCELGSVSLKGNAYFSVITKHEEEELWENNLLCFDFTTESFGKFLSLPFDNVTAEEEFGIMVLSCVRDEHLAVLYQLDTLGIWISTEIEPNKVSWREFLQVDLYTLDGFPDAFTAGRFIVDEEKQVVVVFNEATEIDLNHGNAFIFGRDGYFTSFNVGDTPPQDFTSYVPSLASLQIEKTGG</sequence>
<evidence type="ECO:0000255" key="1">
    <source>
        <dbReference type="PROSITE-ProRule" id="PRU00080"/>
    </source>
</evidence>
<dbReference type="EMBL" id="AB028610">
    <property type="protein sequence ID" value="BAB02907.1"/>
    <property type="molecule type" value="Genomic_DNA"/>
</dbReference>
<dbReference type="EMBL" id="CP002686">
    <property type="protein sequence ID" value="AEE75422.1"/>
    <property type="molecule type" value="Genomic_DNA"/>
</dbReference>
<dbReference type="RefSeq" id="NP_187999.1">
    <property type="nucleotide sequence ID" value="NM_112236.1"/>
</dbReference>
<dbReference type="BioGRID" id="5929">
    <property type="interactions" value="9"/>
</dbReference>
<dbReference type="GlyGen" id="Q9LRW4">
    <property type="glycosylation" value="1 site"/>
</dbReference>
<dbReference type="PaxDb" id="3702-AT3G13830.1"/>
<dbReference type="EnsemblPlants" id="AT3G13830.1">
    <property type="protein sequence ID" value="AT3G13830.1"/>
    <property type="gene ID" value="AT3G13830"/>
</dbReference>
<dbReference type="GeneID" id="820595"/>
<dbReference type="Gramene" id="AT3G13830.1">
    <property type="protein sequence ID" value="AT3G13830.1"/>
    <property type="gene ID" value="AT3G13830"/>
</dbReference>
<dbReference type="KEGG" id="ath:AT3G13830"/>
<dbReference type="Araport" id="AT3G13830"/>
<dbReference type="TAIR" id="AT3G13830"/>
<dbReference type="HOGENOM" id="CLU_034692_0_0_1"/>
<dbReference type="InParanoid" id="Q9LRW4"/>
<dbReference type="OMA" id="VIEFEIY"/>
<dbReference type="PhylomeDB" id="Q9LRW4"/>
<dbReference type="PRO" id="PR:Q9LRW4"/>
<dbReference type="Proteomes" id="UP000006548">
    <property type="component" value="Chromosome 3"/>
</dbReference>
<dbReference type="ExpressionAtlas" id="Q9LRW4">
    <property type="expression patterns" value="baseline and differential"/>
</dbReference>
<dbReference type="InterPro" id="IPR050233">
    <property type="entry name" value="A_thaliana_F-box"/>
</dbReference>
<dbReference type="InterPro" id="IPR006527">
    <property type="entry name" value="F-box-assoc_dom_typ1"/>
</dbReference>
<dbReference type="InterPro" id="IPR017451">
    <property type="entry name" value="F-box-assoc_interact_dom"/>
</dbReference>
<dbReference type="InterPro" id="IPR036047">
    <property type="entry name" value="F-box-like_dom_sf"/>
</dbReference>
<dbReference type="InterPro" id="IPR001810">
    <property type="entry name" value="F-box_dom"/>
</dbReference>
<dbReference type="NCBIfam" id="TIGR01640">
    <property type="entry name" value="F_box_assoc_1"/>
    <property type="match status" value="1"/>
</dbReference>
<dbReference type="PANTHER" id="PTHR47993:SF289">
    <property type="entry name" value="F-BOX ASSOCIATED UBIQUITINATION EFFECTOR FAMILY PROTEIN"/>
    <property type="match status" value="1"/>
</dbReference>
<dbReference type="PANTHER" id="PTHR47993">
    <property type="entry name" value="OS09G0372900 PROTEIN-RELATED"/>
    <property type="match status" value="1"/>
</dbReference>
<dbReference type="Pfam" id="PF00646">
    <property type="entry name" value="F-box"/>
    <property type="match status" value="1"/>
</dbReference>
<dbReference type="Pfam" id="PF07734">
    <property type="entry name" value="FBA_1"/>
    <property type="match status" value="1"/>
</dbReference>
<dbReference type="SUPFAM" id="SSF81383">
    <property type="entry name" value="F-box domain"/>
    <property type="match status" value="1"/>
</dbReference>
<dbReference type="PROSITE" id="PS50181">
    <property type="entry name" value="FBOX"/>
    <property type="match status" value="1"/>
</dbReference>
<accession>Q9LRW4</accession>
<gene>
    <name type="ordered locus">At3g13830</name>
    <name type="ORF">MCP4.5</name>
</gene>
<proteinExistence type="predicted"/>